<dbReference type="EMBL" id="BX571856">
    <property type="protein sequence ID" value="CAG40480.1"/>
    <property type="molecule type" value="Genomic_DNA"/>
</dbReference>
<dbReference type="RefSeq" id="WP_001043863.1">
    <property type="nucleotide sequence ID" value="NC_002952.2"/>
</dbReference>
<dbReference type="SMR" id="Q6GGT8"/>
<dbReference type="KEGG" id="sar:SAR1482"/>
<dbReference type="HOGENOM" id="CLU_105066_3_2_9"/>
<dbReference type="Proteomes" id="UP000000596">
    <property type="component" value="Chromosome"/>
</dbReference>
<dbReference type="GO" id="GO:0005829">
    <property type="term" value="C:cytosol"/>
    <property type="evidence" value="ECO:0007669"/>
    <property type="project" value="TreeGrafter"/>
</dbReference>
<dbReference type="GO" id="GO:0003677">
    <property type="term" value="F:DNA binding"/>
    <property type="evidence" value="ECO:0007669"/>
    <property type="project" value="UniProtKB-KW"/>
</dbReference>
<dbReference type="GO" id="GO:0030527">
    <property type="term" value="F:structural constituent of chromatin"/>
    <property type="evidence" value="ECO:0007669"/>
    <property type="project" value="InterPro"/>
</dbReference>
<dbReference type="GO" id="GO:0030261">
    <property type="term" value="P:chromosome condensation"/>
    <property type="evidence" value="ECO:0007669"/>
    <property type="project" value="UniProtKB-KW"/>
</dbReference>
<dbReference type="CDD" id="cd13831">
    <property type="entry name" value="HU"/>
    <property type="match status" value="1"/>
</dbReference>
<dbReference type="FunFam" id="4.10.520.10:FF:000001">
    <property type="entry name" value="DNA-binding protein HU"/>
    <property type="match status" value="1"/>
</dbReference>
<dbReference type="Gene3D" id="4.10.520.10">
    <property type="entry name" value="IHF-like DNA-binding proteins"/>
    <property type="match status" value="1"/>
</dbReference>
<dbReference type="InterPro" id="IPR000119">
    <property type="entry name" value="Hist_DNA-bd"/>
</dbReference>
<dbReference type="InterPro" id="IPR020816">
    <property type="entry name" value="Histone-like_DNA-bd_CS"/>
</dbReference>
<dbReference type="InterPro" id="IPR010992">
    <property type="entry name" value="IHF-like_DNA-bd_dom_sf"/>
</dbReference>
<dbReference type="PANTHER" id="PTHR33175">
    <property type="entry name" value="DNA-BINDING PROTEIN HU"/>
    <property type="match status" value="1"/>
</dbReference>
<dbReference type="PANTHER" id="PTHR33175:SF3">
    <property type="entry name" value="DNA-BINDING PROTEIN HU-BETA"/>
    <property type="match status" value="1"/>
</dbReference>
<dbReference type="Pfam" id="PF00216">
    <property type="entry name" value="Bac_DNA_binding"/>
    <property type="match status" value="1"/>
</dbReference>
<dbReference type="PRINTS" id="PR01727">
    <property type="entry name" value="DNABINDINGHU"/>
</dbReference>
<dbReference type="SMART" id="SM00411">
    <property type="entry name" value="BHL"/>
    <property type="match status" value="1"/>
</dbReference>
<dbReference type="SUPFAM" id="SSF47729">
    <property type="entry name" value="IHF-like DNA-binding proteins"/>
    <property type="match status" value="1"/>
</dbReference>
<dbReference type="PROSITE" id="PS00045">
    <property type="entry name" value="HISTONE_LIKE"/>
    <property type="match status" value="1"/>
</dbReference>
<accession>Q6GGT8</accession>
<feature type="chain" id="PRO_0000223378" description="DNA-binding protein HU">
    <location>
        <begin position="1"/>
        <end position="90"/>
    </location>
</feature>
<evidence type="ECO:0000250" key="1"/>
<evidence type="ECO:0000305" key="2"/>
<reference key="1">
    <citation type="journal article" date="2004" name="Proc. Natl. Acad. Sci. U.S.A.">
        <title>Complete genomes of two clinical Staphylococcus aureus strains: evidence for the rapid evolution of virulence and drug resistance.</title>
        <authorList>
            <person name="Holden M.T.G."/>
            <person name="Feil E.J."/>
            <person name="Lindsay J.A."/>
            <person name="Peacock S.J."/>
            <person name="Day N.P.J."/>
            <person name="Enright M.C."/>
            <person name="Foster T.J."/>
            <person name="Moore C.E."/>
            <person name="Hurst L."/>
            <person name="Atkin R."/>
            <person name="Barron A."/>
            <person name="Bason N."/>
            <person name="Bentley S.D."/>
            <person name="Chillingworth C."/>
            <person name="Chillingworth T."/>
            <person name="Churcher C."/>
            <person name="Clark L."/>
            <person name="Corton C."/>
            <person name="Cronin A."/>
            <person name="Doggett J."/>
            <person name="Dowd L."/>
            <person name="Feltwell T."/>
            <person name="Hance Z."/>
            <person name="Harris B."/>
            <person name="Hauser H."/>
            <person name="Holroyd S."/>
            <person name="Jagels K."/>
            <person name="James K.D."/>
            <person name="Lennard N."/>
            <person name="Line A."/>
            <person name="Mayes R."/>
            <person name="Moule S."/>
            <person name="Mungall K."/>
            <person name="Ormond D."/>
            <person name="Quail M.A."/>
            <person name="Rabbinowitsch E."/>
            <person name="Rutherford K.M."/>
            <person name="Sanders M."/>
            <person name="Sharp S."/>
            <person name="Simmonds M."/>
            <person name="Stevens K."/>
            <person name="Whitehead S."/>
            <person name="Barrell B.G."/>
            <person name="Spratt B.G."/>
            <person name="Parkhill J."/>
        </authorList>
    </citation>
    <scope>NUCLEOTIDE SEQUENCE [LARGE SCALE GENOMIC DNA]</scope>
    <source>
        <strain>MRSA252</strain>
    </source>
</reference>
<keyword id="KW-0226">DNA condensation</keyword>
<keyword id="KW-0238">DNA-binding</keyword>
<comment type="function">
    <text evidence="1">Histone-like DNA-binding protein which is capable of wrapping DNA to stabilize it, and thus to prevent its denaturation under extreme environmental conditions.</text>
</comment>
<comment type="subunit">
    <text evidence="1">Homodimer.</text>
</comment>
<comment type="similarity">
    <text evidence="2">Belongs to the bacterial histone-like protein family.</text>
</comment>
<organism>
    <name type="scientific">Staphylococcus aureus (strain MRSA252)</name>
    <dbReference type="NCBI Taxonomy" id="282458"/>
    <lineage>
        <taxon>Bacteria</taxon>
        <taxon>Bacillati</taxon>
        <taxon>Bacillota</taxon>
        <taxon>Bacilli</taxon>
        <taxon>Bacillales</taxon>
        <taxon>Staphylococcaceae</taxon>
        <taxon>Staphylococcus</taxon>
    </lineage>
</organism>
<protein>
    <recommendedName>
        <fullName>DNA-binding protein HU</fullName>
    </recommendedName>
</protein>
<proteinExistence type="inferred from homology"/>
<name>DBH_STAAR</name>
<sequence length="90" mass="9626">MNKTDLINAVAEQADLTKKEAGSAVDAVFESIQNSLAKGEKVQLIGFGNFEVRERAARKGRNPQTGKEIDIPASKVPAFKAGKALKDAVK</sequence>
<gene>
    <name type="primary">hup</name>
    <name type="ordered locus">SAR1482</name>
</gene>